<sequence>MLDIFRGLKSLVKISHVNTDSPVFRLHYSITVIILMSFSLIVTTRQYVGNPIDCVHTKDIPADVLNTYCWIHSTFALKSLFLKEVGKDVPYPGVGNSAEATAADKKIYKYYQWVCFCLFFQAILFYTPRWLWKSWEGGKIHALMMDLDIGICSEIEKKQKKKLLLDYLWDNLRYHNWWAYRYYVCEFLSLCNVIGQMFLMNRFFDGEFMTFGLDVITHMEADQEDRMDPMIYIFPRMTKCTFYKYGVSGEVERHDAICILPLNVVNEKIYIFLWFWFIILTILTTLTIFYRIIIIFSPRMRVYLLRLRFRLVRRDAIEIIVRRSKMGDWFLLYRLGENLDSIIFRDVMQDLANRLHNNQHHRVPGMKGEIQDA</sequence>
<name>SHAKB_ANOGA</name>
<keyword id="KW-0965">Cell junction</keyword>
<keyword id="KW-1003">Cell membrane</keyword>
<keyword id="KW-0303">Gap junction</keyword>
<keyword id="KW-0407">Ion channel</keyword>
<keyword id="KW-0406">Ion transport</keyword>
<keyword id="KW-0472">Membrane</keyword>
<keyword id="KW-1185">Reference proteome</keyword>
<keyword id="KW-0812">Transmembrane</keyword>
<keyword id="KW-1133">Transmembrane helix</keyword>
<keyword id="KW-0813">Transport</keyword>
<organism>
    <name type="scientific">Anopheles gambiae</name>
    <name type="common">African malaria mosquito</name>
    <dbReference type="NCBI Taxonomy" id="7165"/>
    <lineage>
        <taxon>Eukaryota</taxon>
        <taxon>Metazoa</taxon>
        <taxon>Ecdysozoa</taxon>
        <taxon>Arthropoda</taxon>
        <taxon>Hexapoda</taxon>
        <taxon>Insecta</taxon>
        <taxon>Pterygota</taxon>
        <taxon>Neoptera</taxon>
        <taxon>Endopterygota</taxon>
        <taxon>Diptera</taxon>
        <taxon>Nematocera</taxon>
        <taxon>Culicoidea</taxon>
        <taxon>Culicidae</taxon>
        <taxon>Anophelinae</taxon>
        <taxon>Anopheles</taxon>
    </lineage>
</organism>
<accession>Q7PXN1</accession>
<dbReference type="EMBL" id="AAAB01008987">
    <property type="protein sequence ID" value="EAA00824.1"/>
    <property type="molecule type" value="Genomic_DNA"/>
</dbReference>
<dbReference type="SMR" id="Q7PXN1"/>
<dbReference type="FunCoup" id="Q7PXN1">
    <property type="interactions" value="66"/>
</dbReference>
<dbReference type="STRING" id="7165.Q7PXN1"/>
<dbReference type="PaxDb" id="7165-AGAP001487-PA"/>
<dbReference type="EnsemblMetazoa" id="AGAP001487-RA">
    <property type="protein sequence ID" value="AGAP001487-PA"/>
    <property type="gene ID" value="AGAP001487"/>
</dbReference>
<dbReference type="GeneID" id="4577242"/>
<dbReference type="KEGG" id="aga:4577242"/>
<dbReference type="VEuPathDB" id="VectorBase:AGAMI1_008359"/>
<dbReference type="VEuPathDB" id="VectorBase:AGAP001487"/>
<dbReference type="eggNOG" id="ENOG502QWRS">
    <property type="taxonomic scope" value="Eukaryota"/>
</dbReference>
<dbReference type="HOGENOM" id="CLU_035763_1_1_1"/>
<dbReference type="InParanoid" id="Q7PXN1"/>
<dbReference type="OMA" id="CQFFKFG"/>
<dbReference type="OrthoDB" id="5867527at2759"/>
<dbReference type="PhylomeDB" id="Q7PXN1"/>
<dbReference type="Proteomes" id="UP000007062">
    <property type="component" value="Chromosome 2R"/>
</dbReference>
<dbReference type="GO" id="GO:0005921">
    <property type="term" value="C:gap junction"/>
    <property type="evidence" value="ECO:0000250"/>
    <property type="project" value="UniProtKB"/>
</dbReference>
<dbReference type="GO" id="GO:0005886">
    <property type="term" value="C:plasma membrane"/>
    <property type="evidence" value="ECO:0000318"/>
    <property type="project" value="GO_Central"/>
</dbReference>
<dbReference type="GO" id="GO:0005243">
    <property type="term" value="F:gap junction channel activity"/>
    <property type="evidence" value="ECO:0000250"/>
    <property type="project" value="UniProtKB"/>
</dbReference>
<dbReference type="GO" id="GO:0009881">
    <property type="term" value="F:photoreceptor activity"/>
    <property type="evidence" value="ECO:0000250"/>
    <property type="project" value="UniProtKB"/>
</dbReference>
<dbReference type="GO" id="GO:0016264">
    <property type="term" value="P:gap junction assembly"/>
    <property type="evidence" value="ECO:0000250"/>
    <property type="project" value="UniProtKB"/>
</dbReference>
<dbReference type="GO" id="GO:0034220">
    <property type="term" value="P:monoatomic ion transmembrane transport"/>
    <property type="evidence" value="ECO:0007669"/>
    <property type="project" value="UniProtKB-KW"/>
</dbReference>
<dbReference type="GO" id="GO:0009416">
    <property type="term" value="P:response to light stimulus"/>
    <property type="evidence" value="ECO:0000250"/>
    <property type="project" value="UniProtKB"/>
</dbReference>
<dbReference type="InterPro" id="IPR000990">
    <property type="entry name" value="Innexin"/>
</dbReference>
<dbReference type="PANTHER" id="PTHR11893">
    <property type="entry name" value="INNEXIN"/>
    <property type="match status" value="1"/>
</dbReference>
<dbReference type="PANTHER" id="PTHR11893:SF40">
    <property type="entry name" value="INNEXIN SHAKING-B"/>
    <property type="match status" value="1"/>
</dbReference>
<dbReference type="Pfam" id="PF00876">
    <property type="entry name" value="Innexin"/>
    <property type="match status" value="1"/>
</dbReference>
<dbReference type="PRINTS" id="PR01262">
    <property type="entry name" value="INNEXIN"/>
</dbReference>
<dbReference type="PROSITE" id="PS51013">
    <property type="entry name" value="PANNEXIN"/>
    <property type="match status" value="1"/>
</dbReference>
<reference evidence="6" key="1">
    <citation type="journal article" date="2002" name="Science">
        <title>The genome sequence of the malaria mosquito Anopheles gambiae.</title>
        <authorList>
            <person name="Holt R.A."/>
            <person name="Subramanian G.M."/>
            <person name="Halpern A."/>
            <person name="Sutton G.G."/>
            <person name="Charlab R."/>
            <person name="Nusskern D.R."/>
            <person name="Wincker P."/>
            <person name="Clark A.G."/>
            <person name="Ribeiro J.M.C."/>
            <person name="Wides R."/>
            <person name="Salzberg S.L."/>
            <person name="Loftus B.J."/>
            <person name="Yandell M.D."/>
            <person name="Majoros W.H."/>
            <person name="Rusch D.B."/>
            <person name="Lai Z."/>
            <person name="Kraft C.L."/>
            <person name="Abril J.F."/>
            <person name="Anthouard V."/>
            <person name="Arensburger P."/>
            <person name="Atkinson P.W."/>
            <person name="Baden H."/>
            <person name="de Berardinis V."/>
            <person name="Baldwin D."/>
            <person name="Benes V."/>
            <person name="Biedler J."/>
            <person name="Blass C."/>
            <person name="Bolanos R."/>
            <person name="Boscus D."/>
            <person name="Barnstead M."/>
            <person name="Cai S."/>
            <person name="Center A."/>
            <person name="Chaturverdi K."/>
            <person name="Christophides G.K."/>
            <person name="Chrystal M.A.M."/>
            <person name="Clamp M."/>
            <person name="Cravchik A."/>
            <person name="Curwen V."/>
            <person name="Dana A."/>
            <person name="Delcher A."/>
            <person name="Dew I."/>
            <person name="Evans C.A."/>
            <person name="Flanigan M."/>
            <person name="Grundschober-Freimoser A."/>
            <person name="Friedli L."/>
            <person name="Gu Z."/>
            <person name="Guan P."/>
            <person name="Guigo R."/>
            <person name="Hillenmeyer M.E."/>
            <person name="Hladun S.L."/>
            <person name="Hogan J.R."/>
            <person name="Hong Y.S."/>
            <person name="Hoover J."/>
            <person name="Jaillon O."/>
            <person name="Ke Z."/>
            <person name="Kodira C.D."/>
            <person name="Kokoza E."/>
            <person name="Koutsos A."/>
            <person name="Letunic I."/>
            <person name="Levitsky A.A."/>
            <person name="Liang Y."/>
            <person name="Lin J.-J."/>
            <person name="Lobo N.F."/>
            <person name="Lopez J.R."/>
            <person name="Malek J.A."/>
            <person name="McIntosh T.C."/>
            <person name="Meister S."/>
            <person name="Miller J.R."/>
            <person name="Mobarry C."/>
            <person name="Mongin E."/>
            <person name="Murphy S.D."/>
            <person name="O'Brochta D.A."/>
            <person name="Pfannkoch C."/>
            <person name="Qi R."/>
            <person name="Regier M.A."/>
            <person name="Remington K."/>
            <person name="Shao H."/>
            <person name="Sharakhova M.V."/>
            <person name="Sitter C.D."/>
            <person name="Shetty J."/>
            <person name="Smith T.J."/>
            <person name="Strong R."/>
            <person name="Sun J."/>
            <person name="Thomasova D."/>
            <person name="Ton L.Q."/>
            <person name="Topalis P."/>
            <person name="Tu Z.J."/>
            <person name="Unger M.F."/>
            <person name="Walenz B."/>
            <person name="Wang A.H."/>
            <person name="Wang J."/>
            <person name="Wang M."/>
            <person name="Wang X."/>
            <person name="Woodford K.J."/>
            <person name="Wortman J.R."/>
            <person name="Wu M."/>
            <person name="Yao A."/>
            <person name="Zdobnov E.M."/>
            <person name="Zhang H."/>
            <person name="Zhao Q."/>
            <person name="Zhao S."/>
            <person name="Zhu S.C."/>
            <person name="Zhimulev I."/>
            <person name="Coluzzi M."/>
            <person name="della Torre A."/>
            <person name="Roth C.W."/>
            <person name="Louis C."/>
            <person name="Kalush F."/>
            <person name="Mural R.J."/>
            <person name="Myers E.W."/>
            <person name="Adams M.D."/>
            <person name="Smith H.O."/>
            <person name="Broder S."/>
            <person name="Gardner M.J."/>
            <person name="Fraser C.M."/>
            <person name="Birney E."/>
            <person name="Bork P."/>
            <person name="Brey P.T."/>
            <person name="Venter J.C."/>
            <person name="Weissenbach J."/>
            <person name="Kafatos F.C."/>
            <person name="Collins F.H."/>
            <person name="Hoffman S.L."/>
        </authorList>
    </citation>
    <scope>NUCLEOTIDE SEQUENCE [LARGE SCALE GENOMIC DNA]</scope>
    <source>
        <strain evidence="6">PEST</strain>
    </source>
</reference>
<gene>
    <name evidence="2" type="primary">shakB</name>
    <name type="ORF">AGAP001487</name>
</gene>
<comment type="function">
    <text evidence="2">Structural component of the gap junctions at electrical synapses in distal and mid-depth levels in the lamina.</text>
</comment>
<comment type="subunit">
    <text evidence="2">Monomer.</text>
</comment>
<comment type="subcellular location">
    <subcellularLocation>
        <location evidence="5">Cell membrane</location>
        <topology evidence="4">Multi-pass membrane protein</topology>
    </subcellularLocation>
    <subcellularLocation>
        <location evidence="1">Cell junction</location>
        <location evidence="1">Gap junction</location>
    </subcellularLocation>
</comment>
<comment type="similarity">
    <text evidence="4">Belongs to the pannexin family.</text>
</comment>
<proteinExistence type="inferred from homology"/>
<feature type="chain" id="PRO_0000307710" description="Innexin shaking-B">
    <location>
        <begin position="1"/>
        <end position="373"/>
    </location>
</feature>
<feature type="topological domain" description="Cytoplasmic" evidence="3">
    <location>
        <begin position="1"/>
        <end position="21"/>
    </location>
</feature>
<feature type="transmembrane region" description="Helical" evidence="4">
    <location>
        <begin position="22"/>
        <end position="42"/>
    </location>
</feature>
<feature type="topological domain" description="Extracellular" evidence="3">
    <location>
        <begin position="43"/>
        <end position="106"/>
    </location>
</feature>
<feature type="transmembrane region" description="Helical" evidence="4">
    <location>
        <begin position="107"/>
        <end position="127"/>
    </location>
</feature>
<feature type="topological domain" description="Cytoplasmic" evidence="3">
    <location>
        <begin position="128"/>
        <end position="176"/>
    </location>
</feature>
<feature type="transmembrane region" description="Helical" evidence="4">
    <location>
        <begin position="177"/>
        <end position="199"/>
    </location>
</feature>
<feature type="topological domain" description="Extracellular" evidence="3">
    <location>
        <begin position="200"/>
        <end position="268"/>
    </location>
</feature>
<feature type="transmembrane region" description="Helical" evidence="4">
    <location>
        <begin position="269"/>
        <end position="289"/>
    </location>
</feature>
<feature type="topological domain" description="Cytoplasmic" evidence="3">
    <location>
        <begin position="290"/>
        <end position="373"/>
    </location>
</feature>
<protein>
    <recommendedName>
        <fullName>Innexin shaking-B</fullName>
    </recommendedName>
</protein>
<evidence type="ECO:0000250" key="1"/>
<evidence type="ECO:0000250" key="2">
    <source>
        <dbReference type="UniProtKB" id="P33085"/>
    </source>
</evidence>
<evidence type="ECO:0000255" key="3"/>
<evidence type="ECO:0000255" key="4">
    <source>
        <dbReference type="PROSITE-ProRule" id="PRU00351"/>
    </source>
</evidence>
<evidence type="ECO:0000305" key="5"/>
<evidence type="ECO:0000312" key="6">
    <source>
        <dbReference type="EMBL" id="EAA00824.1"/>
    </source>
</evidence>